<organism>
    <name type="scientific">Pseudomonas fluorescens (strain Pf0-1)</name>
    <dbReference type="NCBI Taxonomy" id="205922"/>
    <lineage>
        <taxon>Bacteria</taxon>
        <taxon>Pseudomonadati</taxon>
        <taxon>Pseudomonadota</taxon>
        <taxon>Gammaproteobacteria</taxon>
        <taxon>Pseudomonadales</taxon>
        <taxon>Pseudomonadaceae</taxon>
        <taxon>Pseudomonas</taxon>
    </lineage>
</organism>
<name>OADC1_PSEPF</name>
<keyword id="KW-0210">Decarboxylase</keyword>
<keyword id="KW-0456">Lyase</keyword>
<keyword id="KW-0460">Magnesium</keyword>
<keyword id="KW-0479">Metal-binding</keyword>
<evidence type="ECO:0000255" key="1">
    <source>
        <dbReference type="HAMAP-Rule" id="MF_01299"/>
    </source>
</evidence>
<evidence type="ECO:0000305" key="2"/>
<feature type="chain" id="PRO_0000364063" description="Oxaloacetate decarboxylase 1">
    <location>
        <begin position="1"/>
        <end position="289"/>
    </location>
</feature>
<feature type="binding site" evidence="1">
    <location>
        <position position="50"/>
    </location>
    <ligand>
        <name>substrate</name>
    </ligand>
</feature>
<feature type="binding site" evidence="1">
    <location>
        <position position="88"/>
    </location>
    <ligand>
        <name>Mg(2+)</name>
        <dbReference type="ChEBI" id="CHEBI:18420"/>
    </ligand>
</feature>
<feature type="binding site" evidence="1">
    <location>
        <position position="159"/>
    </location>
    <ligand>
        <name>substrate</name>
    </ligand>
</feature>
<feature type="binding site" evidence="1">
    <location>
        <position position="235"/>
    </location>
    <ligand>
        <name>substrate</name>
    </ligand>
</feature>
<comment type="function">
    <text evidence="1">Catalyzes the decarboxylation of oxaloacetate into pyruvate. Seems to play a role in maintaining cellular concentrations of bicarbonate and pyruvate.</text>
</comment>
<comment type="catalytic activity">
    <reaction evidence="1">
        <text>oxaloacetate + H(+) = pyruvate + CO2</text>
        <dbReference type="Rhea" id="RHEA:15641"/>
        <dbReference type="ChEBI" id="CHEBI:15361"/>
        <dbReference type="ChEBI" id="CHEBI:15378"/>
        <dbReference type="ChEBI" id="CHEBI:16452"/>
        <dbReference type="ChEBI" id="CHEBI:16526"/>
        <dbReference type="EC" id="4.1.1.112"/>
    </reaction>
</comment>
<comment type="cofactor">
    <cofactor evidence="1">
        <name>Mg(2+)</name>
        <dbReference type="ChEBI" id="CHEBI:18420"/>
    </cofactor>
    <text evidence="1">Binds 1 Mg(2+) ion per subunit.</text>
</comment>
<comment type="subunit">
    <text evidence="1">Homotetramer; dimer of dimers.</text>
</comment>
<comment type="similarity">
    <text evidence="2">Belongs to the isocitrate lyase/PEP mutase superfamily. Oxaloacetate decarboxylase family.</text>
</comment>
<protein>
    <recommendedName>
        <fullName evidence="1">Oxaloacetate decarboxylase 1</fullName>
        <ecNumber evidence="1">4.1.1.112</ecNumber>
    </recommendedName>
</protein>
<gene>
    <name type="ordered locus">Pfl01_2052</name>
</gene>
<dbReference type="EC" id="4.1.1.112" evidence="1"/>
<dbReference type="EMBL" id="CP000094">
    <property type="protein sequence ID" value="ABA73795.1"/>
    <property type="molecule type" value="Genomic_DNA"/>
</dbReference>
<dbReference type="RefSeq" id="WP_007956238.1">
    <property type="nucleotide sequence ID" value="NC_007492.2"/>
</dbReference>
<dbReference type="SMR" id="Q3KEL1"/>
<dbReference type="KEGG" id="pfo:Pfl01_2052"/>
<dbReference type="eggNOG" id="COG2513">
    <property type="taxonomic scope" value="Bacteria"/>
</dbReference>
<dbReference type="HOGENOM" id="CLU_027389_3_2_6"/>
<dbReference type="Proteomes" id="UP000002704">
    <property type="component" value="Chromosome"/>
</dbReference>
<dbReference type="GO" id="GO:0000287">
    <property type="term" value="F:magnesium ion binding"/>
    <property type="evidence" value="ECO:0007669"/>
    <property type="project" value="UniProtKB-UniRule"/>
</dbReference>
<dbReference type="GO" id="GO:0046421">
    <property type="term" value="F:methylisocitrate lyase activity"/>
    <property type="evidence" value="ECO:0007669"/>
    <property type="project" value="TreeGrafter"/>
</dbReference>
<dbReference type="GO" id="GO:0008948">
    <property type="term" value="F:oxaloacetate decarboxylase activity"/>
    <property type="evidence" value="ECO:0007669"/>
    <property type="project" value="UniProtKB-UniRule"/>
</dbReference>
<dbReference type="GO" id="GO:0006107">
    <property type="term" value="P:oxaloacetate metabolic process"/>
    <property type="evidence" value="ECO:0007669"/>
    <property type="project" value="UniProtKB-UniRule"/>
</dbReference>
<dbReference type="GO" id="GO:0019629">
    <property type="term" value="P:propionate catabolic process, 2-methylcitrate cycle"/>
    <property type="evidence" value="ECO:0007669"/>
    <property type="project" value="TreeGrafter"/>
</dbReference>
<dbReference type="GO" id="GO:0042866">
    <property type="term" value="P:pyruvate biosynthetic process"/>
    <property type="evidence" value="ECO:0007669"/>
    <property type="project" value="UniProtKB-UniRule"/>
</dbReference>
<dbReference type="CDD" id="cd00377">
    <property type="entry name" value="ICL_PEPM"/>
    <property type="match status" value="1"/>
</dbReference>
<dbReference type="Gene3D" id="3.20.20.60">
    <property type="entry name" value="Phosphoenolpyruvate-binding domains"/>
    <property type="match status" value="1"/>
</dbReference>
<dbReference type="HAMAP" id="MF_01299">
    <property type="entry name" value="OadC"/>
    <property type="match status" value="1"/>
</dbReference>
<dbReference type="InterPro" id="IPR039556">
    <property type="entry name" value="ICL/PEPM"/>
</dbReference>
<dbReference type="InterPro" id="IPR023687">
    <property type="entry name" value="Oxaloacetate_deCOase_bac"/>
</dbReference>
<dbReference type="InterPro" id="IPR015813">
    <property type="entry name" value="Pyrv/PenolPyrv_kinase-like_dom"/>
</dbReference>
<dbReference type="InterPro" id="IPR040442">
    <property type="entry name" value="Pyrv_kinase-like_dom_sf"/>
</dbReference>
<dbReference type="PANTHER" id="PTHR42905:SF3">
    <property type="entry name" value="OXALOACETATE DECARBOXYLASE"/>
    <property type="match status" value="1"/>
</dbReference>
<dbReference type="PANTHER" id="PTHR42905">
    <property type="entry name" value="PHOSPHOENOLPYRUVATE CARBOXYLASE"/>
    <property type="match status" value="1"/>
</dbReference>
<dbReference type="Pfam" id="PF13714">
    <property type="entry name" value="PEP_mutase"/>
    <property type="match status" value="1"/>
</dbReference>
<dbReference type="SUPFAM" id="SSF51621">
    <property type="entry name" value="Phosphoenolpyruvate/pyruvate domain"/>
    <property type="match status" value="1"/>
</dbReference>
<sequence length="289" mass="31586">MTRLSHQDLRRNFRQLLASDTCYHTASVFDPMSARIAADLGFEVGILGGSVASLQVLGAPDFALITLSEFAEQATRIGRVAQLPVIADADHGYGNALNVMRTIVELERAGVAALTIEDTLLPAQFGRKSTDLITVAEGVGKIRAALEARVDSEMAIIARTNAGILPNQEIISRTKQYQAAGADGICMVGIQDFDQLEQIAEHLTVPLMLVTYGNPALRDDKRLAELGVRVTIDGHGAYFAAIKATYDSLREQRQIFTQASDLSATELTHTYTQPEEYILWAKEYMSVKE</sequence>
<accession>Q3KEL1</accession>
<reference key="1">
    <citation type="journal article" date="2009" name="Genome Biol.">
        <title>Genomic and genetic analyses of diversity and plant interactions of Pseudomonas fluorescens.</title>
        <authorList>
            <person name="Silby M.W."/>
            <person name="Cerdeno-Tarraga A.M."/>
            <person name="Vernikos G.S."/>
            <person name="Giddens S.R."/>
            <person name="Jackson R.W."/>
            <person name="Preston G.M."/>
            <person name="Zhang X.-X."/>
            <person name="Moon C.D."/>
            <person name="Gehrig S.M."/>
            <person name="Godfrey S.A.C."/>
            <person name="Knight C.G."/>
            <person name="Malone J.G."/>
            <person name="Robinson Z."/>
            <person name="Spiers A.J."/>
            <person name="Harris S."/>
            <person name="Challis G.L."/>
            <person name="Yaxley A.M."/>
            <person name="Harris D."/>
            <person name="Seeger K."/>
            <person name="Murphy L."/>
            <person name="Rutter S."/>
            <person name="Squares R."/>
            <person name="Quail M.A."/>
            <person name="Saunders E."/>
            <person name="Mavromatis K."/>
            <person name="Brettin T.S."/>
            <person name="Bentley S.D."/>
            <person name="Hothersall J."/>
            <person name="Stephens E."/>
            <person name="Thomas C.M."/>
            <person name="Parkhill J."/>
            <person name="Levy S.B."/>
            <person name="Rainey P.B."/>
            <person name="Thomson N.R."/>
        </authorList>
    </citation>
    <scope>NUCLEOTIDE SEQUENCE [LARGE SCALE GENOMIC DNA]</scope>
    <source>
        <strain>Pf0-1</strain>
    </source>
</reference>
<proteinExistence type="inferred from homology"/>